<keyword id="KW-1003">Cell membrane</keyword>
<keyword id="KW-0868">Chloride</keyword>
<keyword id="KW-0869">Chloride channel</keyword>
<keyword id="KW-1015">Disulfide bond</keyword>
<keyword id="KW-0325">Glycoprotein</keyword>
<keyword id="KW-0407">Ion channel</keyword>
<keyword id="KW-0406">Ion transport</keyword>
<keyword id="KW-0472">Membrane</keyword>
<keyword id="KW-0628">Postsynaptic cell membrane</keyword>
<keyword id="KW-1185">Reference proteome</keyword>
<keyword id="KW-0732">Signal</keyword>
<keyword id="KW-0770">Synapse</keyword>
<keyword id="KW-0812">Transmembrane</keyword>
<keyword id="KW-1133">Transmembrane helix</keyword>
<keyword id="KW-0813">Transport</keyword>
<protein>
    <recommendedName>
        <fullName>Gamma-aminobutyric acid receptor subunit theta</fullName>
    </recommendedName>
    <alternativeName>
        <fullName evidence="8">GABA(A) receptor subunit theta</fullName>
        <shortName>GABAAR subunit theta</shortName>
    </alternativeName>
</protein>
<proteinExistence type="evidence at transcript level"/>
<comment type="function">
    <text evidence="3 4">Theta subunit of the heteropentameric ligand-gated chloride channel gated by gamma-aminobutyric acid (GABA), a major inhibitory neurotransmitter in the brain (By similarity). GABA-gated chloride channels, also named GABA(A) receptors (GABAAR), consist of five subunits arranged around a central pore and contain GABA active binding site(s) located at the alpha and beta subunit interfaces (By similarity). When activated by GABA, GABAARs selectively allow the flow of chloride anions across the cell membrane down their electrochemical gradient (By similarity).</text>
</comment>
<comment type="catalytic activity">
    <reaction evidence="4">
        <text>chloride(in) = chloride(out)</text>
        <dbReference type="Rhea" id="RHEA:29823"/>
        <dbReference type="ChEBI" id="CHEBI:17996"/>
    </reaction>
</comment>
<comment type="activity regulation">
    <text evidence="4">Potentiated by etomidate, propofol, pregnanolone and pentobarbital.</text>
</comment>
<comment type="subunit">
    <text evidence="4">Heteropentamer, formed by a combination of alpha (GABRA1-6), beta (GABRB1-3), gamma (GABRG1-3), delta (GABRD), epsilon (GABRE), rho (GABRR1-3), pi (GABRP) and theta (GABRQ) chains, each subunit exhibiting distinct physiological and pharmacological properties.</text>
</comment>
<comment type="subcellular location">
    <subcellularLocation>
        <location>Postsynaptic cell membrane</location>
        <topology evidence="5">Multi-pass membrane protein</topology>
    </subcellularLocation>
    <subcellularLocation>
        <location>Cell membrane</location>
        <topology evidence="5">Multi-pass membrane protein</topology>
    </subcellularLocation>
</comment>
<comment type="tissue specificity">
    <text evidence="7">Expressed in brain, lung, and spleen.</text>
</comment>
<comment type="domain">
    <text evidence="1">GABAARs subunits share a common topological structure: a peptide sequence made up of a long extracellular N-terminal, four transmembrane domains, intracellular or cytoplasmic domain located between the third and the fourth transmembrane domains.</text>
</comment>
<comment type="similarity">
    <text evidence="9">Belongs to the ligand-gated ion channel (TC 1.A.9) family. Gamma-aminobutyric acid receptor (TC 1.A.9.5) subfamily. GABRQ sub-subfamily.</text>
</comment>
<name>GBRT_MOUSE</name>
<gene>
    <name evidence="10" type="primary">Gabrq</name>
</gene>
<dbReference type="EMBL" id="AF189260">
    <property type="protein sequence ID" value="AAF70381.1"/>
    <property type="molecule type" value="mRNA"/>
</dbReference>
<dbReference type="CCDS" id="CCDS30188.1"/>
<dbReference type="RefSeq" id="NP_065234.1">
    <property type="nucleotide sequence ID" value="NM_020488.2"/>
</dbReference>
<dbReference type="RefSeq" id="XP_006528236.1">
    <property type="nucleotide sequence ID" value="XM_006528173.1"/>
</dbReference>
<dbReference type="SMR" id="Q9JLF1"/>
<dbReference type="FunCoup" id="Q9JLF1">
    <property type="interactions" value="377"/>
</dbReference>
<dbReference type="STRING" id="10090.ENSMUSP00000033711"/>
<dbReference type="ChEMBL" id="CHEMBL2094133"/>
<dbReference type="DrugCentral" id="Q9JLF1"/>
<dbReference type="GlyCosmos" id="Q9JLF1">
    <property type="glycosylation" value="1 site, No reported glycans"/>
</dbReference>
<dbReference type="GlyGen" id="Q9JLF1">
    <property type="glycosylation" value="2 sites"/>
</dbReference>
<dbReference type="PhosphoSitePlus" id="Q9JLF1"/>
<dbReference type="PaxDb" id="10090-ENSMUSP00000033711"/>
<dbReference type="ProteomicsDB" id="272942"/>
<dbReference type="Antibodypedia" id="73628">
    <property type="antibodies" value="101 antibodies from 20 providers"/>
</dbReference>
<dbReference type="DNASU" id="57249"/>
<dbReference type="Ensembl" id="ENSMUST00000033711.6">
    <property type="protein sequence ID" value="ENSMUSP00000033711.6"/>
    <property type="gene ID" value="ENSMUSG00000031344.12"/>
</dbReference>
<dbReference type="GeneID" id="57249"/>
<dbReference type="KEGG" id="mmu:57249"/>
<dbReference type="UCSC" id="uc009tkq.2">
    <property type="organism name" value="mouse"/>
</dbReference>
<dbReference type="AGR" id="MGI:1888498"/>
<dbReference type="CTD" id="55879"/>
<dbReference type="MGI" id="MGI:1888498">
    <property type="gene designation" value="Gabrq"/>
</dbReference>
<dbReference type="VEuPathDB" id="HostDB:ENSMUSG00000031344"/>
<dbReference type="eggNOG" id="KOG3643">
    <property type="taxonomic scope" value="Eukaryota"/>
</dbReference>
<dbReference type="GeneTree" id="ENSGT00940000162167"/>
<dbReference type="InParanoid" id="Q9JLF1"/>
<dbReference type="OMA" id="IVLYWEG"/>
<dbReference type="OrthoDB" id="8890589at2759"/>
<dbReference type="PhylomeDB" id="Q9JLF1"/>
<dbReference type="TreeFam" id="TF315453"/>
<dbReference type="Reactome" id="R-MMU-977443">
    <property type="pathway name" value="GABA receptor activation"/>
</dbReference>
<dbReference type="BioGRID-ORCS" id="57249">
    <property type="hits" value="4 hits in 80 CRISPR screens"/>
</dbReference>
<dbReference type="PRO" id="PR:Q9JLF1"/>
<dbReference type="Proteomes" id="UP000000589">
    <property type="component" value="Chromosome X"/>
</dbReference>
<dbReference type="RNAct" id="Q9JLF1">
    <property type="molecule type" value="protein"/>
</dbReference>
<dbReference type="Bgee" id="ENSMUSG00000031344">
    <property type="expression patterns" value="Expressed in secondary oocyte and 24 other cell types or tissues"/>
</dbReference>
<dbReference type="ExpressionAtlas" id="Q9JLF1">
    <property type="expression patterns" value="baseline and differential"/>
</dbReference>
<dbReference type="GO" id="GO:0034707">
    <property type="term" value="C:chloride channel complex"/>
    <property type="evidence" value="ECO:0007669"/>
    <property type="project" value="UniProtKB-KW"/>
</dbReference>
<dbReference type="GO" id="GO:0005886">
    <property type="term" value="C:plasma membrane"/>
    <property type="evidence" value="ECO:0000250"/>
    <property type="project" value="MGI"/>
</dbReference>
<dbReference type="GO" id="GO:0045211">
    <property type="term" value="C:postsynaptic membrane"/>
    <property type="evidence" value="ECO:0007669"/>
    <property type="project" value="UniProtKB-SubCell"/>
</dbReference>
<dbReference type="GO" id="GO:0043235">
    <property type="term" value="C:receptor complex"/>
    <property type="evidence" value="ECO:0000266"/>
    <property type="project" value="MGI"/>
</dbReference>
<dbReference type="GO" id="GO:0004890">
    <property type="term" value="F:GABA-A receptor activity"/>
    <property type="evidence" value="ECO:0000250"/>
    <property type="project" value="UniProtKB"/>
</dbReference>
<dbReference type="GO" id="GO:0022851">
    <property type="term" value="F:GABA-gated chloride ion channel activity"/>
    <property type="evidence" value="ECO:0000250"/>
    <property type="project" value="UniProtKB"/>
</dbReference>
<dbReference type="GO" id="GO:0006821">
    <property type="term" value="P:chloride transport"/>
    <property type="evidence" value="ECO:0000250"/>
    <property type="project" value="MGI"/>
</dbReference>
<dbReference type="GO" id="GO:0007214">
    <property type="term" value="P:gamma-aminobutyric acid signaling pathway"/>
    <property type="evidence" value="ECO:0000250"/>
    <property type="project" value="MGI"/>
</dbReference>
<dbReference type="CDD" id="cd19003">
    <property type="entry name" value="LGIC_ECD_GABAAR_theta"/>
    <property type="match status" value="1"/>
</dbReference>
<dbReference type="CDD" id="cd19056">
    <property type="entry name" value="LGIC_TM_GABAAR_theta"/>
    <property type="match status" value="1"/>
</dbReference>
<dbReference type="FunFam" id="1.20.58.390:FF:000054">
    <property type="entry name" value="Gamma-aminobutyric acid (GABA-A) receptor, subunit theta"/>
    <property type="match status" value="1"/>
</dbReference>
<dbReference type="FunFam" id="2.70.170.10:FF:000033">
    <property type="entry name" value="Gamma-aminobutyric acid (GABA-A) receptor, subunit theta"/>
    <property type="match status" value="1"/>
</dbReference>
<dbReference type="Gene3D" id="2.70.170.10">
    <property type="entry name" value="Neurotransmitter-gated ion-channel ligand-binding domain"/>
    <property type="match status" value="1"/>
</dbReference>
<dbReference type="Gene3D" id="1.20.58.390">
    <property type="entry name" value="Neurotransmitter-gated ion-channel transmembrane domain"/>
    <property type="match status" value="1"/>
</dbReference>
<dbReference type="InterPro" id="IPR006028">
    <property type="entry name" value="GABAA/Glycine_rcpt"/>
</dbReference>
<dbReference type="InterPro" id="IPR008101">
    <property type="entry name" value="GABAAt_rcpt"/>
</dbReference>
<dbReference type="InterPro" id="IPR006202">
    <property type="entry name" value="Neur_chan_lig-bd"/>
</dbReference>
<dbReference type="InterPro" id="IPR036734">
    <property type="entry name" value="Neur_chan_lig-bd_sf"/>
</dbReference>
<dbReference type="InterPro" id="IPR006201">
    <property type="entry name" value="Neur_channel"/>
</dbReference>
<dbReference type="InterPro" id="IPR036719">
    <property type="entry name" value="Neuro-gated_channel_TM_sf"/>
</dbReference>
<dbReference type="InterPro" id="IPR038050">
    <property type="entry name" value="Neuro_actylchol_rec"/>
</dbReference>
<dbReference type="InterPro" id="IPR006029">
    <property type="entry name" value="Neurotrans-gated_channel_TM"/>
</dbReference>
<dbReference type="InterPro" id="IPR018000">
    <property type="entry name" value="Neurotransmitter_ion_chnl_CS"/>
</dbReference>
<dbReference type="NCBIfam" id="TIGR00860">
    <property type="entry name" value="LIC"/>
    <property type="match status" value="1"/>
</dbReference>
<dbReference type="PANTHER" id="PTHR18945">
    <property type="entry name" value="NEUROTRANSMITTER GATED ION CHANNEL"/>
    <property type="match status" value="1"/>
</dbReference>
<dbReference type="Pfam" id="PF02931">
    <property type="entry name" value="Neur_chan_LBD"/>
    <property type="match status" value="1"/>
</dbReference>
<dbReference type="Pfam" id="PF02932">
    <property type="entry name" value="Neur_chan_memb"/>
    <property type="match status" value="1"/>
</dbReference>
<dbReference type="PRINTS" id="PR00253">
    <property type="entry name" value="GABAARECEPTR"/>
</dbReference>
<dbReference type="PRINTS" id="PR01725">
    <property type="entry name" value="GABAARTHETA"/>
</dbReference>
<dbReference type="PRINTS" id="PR00252">
    <property type="entry name" value="NRIONCHANNEL"/>
</dbReference>
<dbReference type="SUPFAM" id="SSF90112">
    <property type="entry name" value="Neurotransmitter-gated ion-channel transmembrane pore"/>
    <property type="match status" value="1"/>
</dbReference>
<dbReference type="SUPFAM" id="SSF63712">
    <property type="entry name" value="Nicotinic receptor ligand binding domain-like"/>
    <property type="match status" value="1"/>
</dbReference>
<dbReference type="PROSITE" id="PS00236">
    <property type="entry name" value="NEUROTR_ION_CHANNEL"/>
    <property type="match status" value="1"/>
</dbReference>
<evidence type="ECO:0000250" key="1">
    <source>
        <dbReference type="UniProtKB" id="P18507"/>
    </source>
</evidence>
<evidence type="ECO:0000250" key="2">
    <source>
        <dbReference type="UniProtKB" id="P28472"/>
    </source>
</evidence>
<evidence type="ECO:0000250" key="3">
    <source>
        <dbReference type="UniProtKB" id="P47870"/>
    </source>
</evidence>
<evidence type="ECO:0000250" key="4">
    <source>
        <dbReference type="UniProtKB" id="Q9UN88"/>
    </source>
</evidence>
<evidence type="ECO:0000255" key="5"/>
<evidence type="ECO:0000256" key="6">
    <source>
        <dbReference type="SAM" id="MobiDB-lite"/>
    </source>
</evidence>
<evidence type="ECO:0000269" key="7">
    <source>
    </source>
</evidence>
<evidence type="ECO:0000303" key="8">
    <source>
    </source>
</evidence>
<evidence type="ECO:0000305" key="9"/>
<evidence type="ECO:0000312" key="10">
    <source>
        <dbReference type="MGI" id="MGI:1888498"/>
    </source>
</evidence>
<accession>Q9JLF1</accession>
<reference key="1">
    <citation type="journal article" date="2000" name="J. Neurosci.">
        <title>GABAA receptor epsilon and theta subunits display unusual structural variation between species and are enriched in the rat locus ceruleus.</title>
        <authorList>
            <person name="Sinkkonen S.T."/>
            <person name="Hanna M.C."/>
            <person name="Kirkness E.F."/>
            <person name="Korpi E.R."/>
        </authorList>
    </citation>
    <scope>NUCLEOTIDE SEQUENCE [MRNA]</scope>
    <scope>TISSUE SPECIFICITY</scope>
</reference>
<feature type="signal peptide" evidence="5">
    <location>
        <begin position="1"/>
        <end position="21"/>
    </location>
</feature>
<feature type="chain" id="PRO_0000460470" description="Gamma-aminobutyric acid receptor subunit theta" evidence="5">
    <location>
        <begin position="22"/>
        <end position="638"/>
    </location>
</feature>
<feature type="topological domain" description="Extracellular" evidence="9">
    <location>
        <begin position="22"/>
        <end position="267"/>
    </location>
</feature>
<feature type="transmembrane region" description="Helical" evidence="5">
    <location>
        <begin position="268"/>
        <end position="288"/>
    </location>
</feature>
<feature type="topological domain" description="Cytoplasmic" evidence="9">
    <location>
        <begin position="289"/>
        <end position="296"/>
    </location>
</feature>
<feature type="transmembrane region" description="Helical" evidence="5">
    <location>
        <begin position="297"/>
        <end position="314"/>
    </location>
</feature>
<feature type="topological domain" description="Extracellular" evidence="9">
    <location>
        <begin position="315"/>
        <end position="325"/>
    </location>
</feature>
<feature type="transmembrane region" description="Helical" evidence="5">
    <location>
        <begin position="326"/>
        <end position="346"/>
    </location>
</feature>
<feature type="topological domain" description="Cytoplasmic" evidence="9">
    <location>
        <begin position="347"/>
        <end position="617"/>
    </location>
</feature>
<feature type="transmembrane region" description="Helical" evidence="5">
    <location>
        <begin position="618"/>
        <end position="638"/>
    </location>
</feature>
<feature type="region of interest" description="Disordered" evidence="6">
    <location>
        <begin position="491"/>
        <end position="515"/>
    </location>
</feature>
<feature type="compositionally biased region" description="Acidic residues" evidence="6">
    <location>
        <begin position="492"/>
        <end position="502"/>
    </location>
</feature>
<feature type="glycosylation site" description="N-linked (GlcNAc...) asparagine" evidence="5">
    <location>
        <position position="127"/>
    </location>
</feature>
<feature type="disulfide bond" evidence="2">
    <location>
        <begin position="183"/>
        <end position="197"/>
    </location>
</feature>
<organism>
    <name type="scientific">Mus musculus</name>
    <name type="common">Mouse</name>
    <dbReference type="NCBI Taxonomy" id="10090"/>
    <lineage>
        <taxon>Eukaryota</taxon>
        <taxon>Metazoa</taxon>
        <taxon>Chordata</taxon>
        <taxon>Craniata</taxon>
        <taxon>Vertebrata</taxon>
        <taxon>Euteleostomi</taxon>
        <taxon>Mammalia</taxon>
        <taxon>Eutheria</taxon>
        <taxon>Euarchontoglires</taxon>
        <taxon>Glires</taxon>
        <taxon>Rodentia</taxon>
        <taxon>Myomorpha</taxon>
        <taxon>Muroidea</taxon>
        <taxon>Muridae</taxon>
        <taxon>Murinae</taxon>
        <taxon>Mus</taxon>
        <taxon>Mus</taxon>
    </lineage>
</organism>
<sequence>MGIRGMLRAAALLLLIRTWLAESNGPSPTPKFHFELSSSTPEVILDLFNCKNCANEAVVQKILDRVLSTYDVRLRPNFGGAPVPVSVSIYVSSIEQISEINMDYTITMFLHQTWKDTRLAYYETNLNLTLDYRMHEKLWVPDCYFVNSKDAFVHDVTVENRVFQLHPDGTVRYGIRLTTTAACSLDLQKFPMDKQSCKLEVESYGYTVEDIVLSWEDDNAIHITDGLHIPQYTYLGRTITSKEVYFYTGSYMRLIVKFQVQREVRSYLVQVYWPTVLTTILSWISFWMNYDSSAARVTIGLTSILVLTTIDSHMRDKLPHISCIKAIDIYILVCLFFVFLSLLEYVYINYLFFSQVPRRNHRRCRKPRRVVARYRYQEVVVANVQDGLINVEDRVEDRAGPLPDSPMQAHLASQESLGSLVFTSEQAQLATSESLSLLSSASSQTQLATGESLSDLPSTSEQTVPECTIHFHGFLTNDSIIPIKIHSRSDACDDEDSEESLSSEESHGHGSSHTGRLKLQISQRCVQEASWDLDKIEILQDDISITSSWLGLDEQCKGDADSIWSLTDEELMACDQEKDSSSESEENCSPSPGCSFNEGFSFQLFKPNRVPKVDRWSRFLFPLSFGLFNVVYWLYHVY</sequence>